<reference key="1">
    <citation type="journal article" date="2003" name="Nat. Genet.">
        <title>Comparative analysis of the genome sequences of Bordetella pertussis, Bordetella parapertussis and Bordetella bronchiseptica.</title>
        <authorList>
            <person name="Parkhill J."/>
            <person name="Sebaihia M."/>
            <person name="Preston A."/>
            <person name="Murphy L.D."/>
            <person name="Thomson N.R."/>
            <person name="Harris D.E."/>
            <person name="Holden M.T.G."/>
            <person name="Churcher C.M."/>
            <person name="Bentley S.D."/>
            <person name="Mungall K.L."/>
            <person name="Cerdeno-Tarraga A.-M."/>
            <person name="Temple L."/>
            <person name="James K.D."/>
            <person name="Harris B."/>
            <person name="Quail M.A."/>
            <person name="Achtman M."/>
            <person name="Atkin R."/>
            <person name="Baker S."/>
            <person name="Basham D."/>
            <person name="Bason N."/>
            <person name="Cherevach I."/>
            <person name="Chillingworth T."/>
            <person name="Collins M."/>
            <person name="Cronin A."/>
            <person name="Davis P."/>
            <person name="Doggett J."/>
            <person name="Feltwell T."/>
            <person name="Goble A."/>
            <person name="Hamlin N."/>
            <person name="Hauser H."/>
            <person name="Holroyd S."/>
            <person name="Jagels K."/>
            <person name="Leather S."/>
            <person name="Moule S."/>
            <person name="Norberczak H."/>
            <person name="O'Neil S."/>
            <person name="Ormond D."/>
            <person name="Price C."/>
            <person name="Rabbinowitsch E."/>
            <person name="Rutter S."/>
            <person name="Sanders M."/>
            <person name="Saunders D."/>
            <person name="Seeger K."/>
            <person name="Sharp S."/>
            <person name="Simmonds M."/>
            <person name="Skelton J."/>
            <person name="Squares R."/>
            <person name="Squares S."/>
            <person name="Stevens K."/>
            <person name="Unwin L."/>
            <person name="Whitehead S."/>
            <person name="Barrell B.G."/>
            <person name="Maskell D.J."/>
        </authorList>
    </citation>
    <scope>NUCLEOTIDE SEQUENCE [LARGE SCALE GENOMIC DNA]</scope>
    <source>
        <strain>ATCC BAA-588 / NCTC 13252 / RB50</strain>
    </source>
</reference>
<evidence type="ECO:0000255" key="1">
    <source>
        <dbReference type="HAMAP-Rule" id="MF_00040"/>
    </source>
</evidence>
<dbReference type="EMBL" id="BX640444">
    <property type="protein sequence ID" value="CAE33101.1"/>
    <property type="molecule type" value="Genomic_DNA"/>
</dbReference>
<dbReference type="RefSeq" id="WP_003811796.1">
    <property type="nucleotide sequence ID" value="NC_002927.3"/>
</dbReference>
<dbReference type="SMR" id="Q7WJ91"/>
<dbReference type="GeneID" id="93203289"/>
<dbReference type="KEGG" id="bbr:BB2608"/>
<dbReference type="eggNOG" id="COG0233">
    <property type="taxonomic scope" value="Bacteria"/>
</dbReference>
<dbReference type="HOGENOM" id="CLU_073981_2_0_4"/>
<dbReference type="Proteomes" id="UP000001027">
    <property type="component" value="Chromosome"/>
</dbReference>
<dbReference type="GO" id="GO:0005829">
    <property type="term" value="C:cytosol"/>
    <property type="evidence" value="ECO:0007669"/>
    <property type="project" value="GOC"/>
</dbReference>
<dbReference type="GO" id="GO:0043023">
    <property type="term" value="F:ribosomal large subunit binding"/>
    <property type="evidence" value="ECO:0007669"/>
    <property type="project" value="TreeGrafter"/>
</dbReference>
<dbReference type="GO" id="GO:0002184">
    <property type="term" value="P:cytoplasmic translational termination"/>
    <property type="evidence" value="ECO:0007669"/>
    <property type="project" value="TreeGrafter"/>
</dbReference>
<dbReference type="CDD" id="cd00520">
    <property type="entry name" value="RRF"/>
    <property type="match status" value="1"/>
</dbReference>
<dbReference type="FunFam" id="1.10.132.20:FF:000001">
    <property type="entry name" value="Ribosome-recycling factor"/>
    <property type="match status" value="1"/>
</dbReference>
<dbReference type="FunFam" id="3.30.1360.40:FF:000001">
    <property type="entry name" value="Ribosome-recycling factor"/>
    <property type="match status" value="1"/>
</dbReference>
<dbReference type="Gene3D" id="3.30.1360.40">
    <property type="match status" value="1"/>
</dbReference>
<dbReference type="Gene3D" id="1.10.132.20">
    <property type="entry name" value="Ribosome-recycling factor"/>
    <property type="match status" value="1"/>
</dbReference>
<dbReference type="HAMAP" id="MF_00040">
    <property type="entry name" value="RRF"/>
    <property type="match status" value="1"/>
</dbReference>
<dbReference type="InterPro" id="IPR002661">
    <property type="entry name" value="Ribosome_recyc_fac"/>
</dbReference>
<dbReference type="InterPro" id="IPR023584">
    <property type="entry name" value="Ribosome_recyc_fac_dom"/>
</dbReference>
<dbReference type="InterPro" id="IPR036191">
    <property type="entry name" value="RRF_sf"/>
</dbReference>
<dbReference type="NCBIfam" id="TIGR00496">
    <property type="entry name" value="frr"/>
    <property type="match status" value="1"/>
</dbReference>
<dbReference type="PANTHER" id="PTHR20982:SF3">
    <property type="entry name" value="MITOCHONDRIAL RIBOSOME RECYCLING FACTOR PSEUDO 1"/>
    <property type="match status" value="1"/>
</dbReference>
<dbReference type="PANTHER" id="PTHR20982">
    <property type="entry name" value="RIBOSOME RECYCLING FACTOR"/>
    <property type="match status" value="1"/>
</dbReference>
<dbReference type="Pfam" id="PF01765">
    <property type="entry name" value="RRF"/>
    <property type="match status" value="1"/>
</dbReference>
<dbReference type="SUPFAM" id="SSF55194">
    <property type="entry name" value="Ribosome recycling factor, RRF"/>
    <property type="match status" value="1"/>
</dbReference>
<feature type="chain" id="PRO_0000167419" description="Ribosome-recycling factor">
    <location>
        <begin position="1"/>
        <end position="186"/>
    </location>
</feature>
<accession>Q7WJ91</accession>
<proteinExistence type="inferred from homology"/>
<protein>
    <recommendedName>
        <fullName evidence="1">Ribosome-recycling factor</fullName>
        <shortName evidence="1">RRF</shortName>
    </recommendedName>
    <alternativeName>
        <fullName evidence="1">Ribosome-releasing factor</fullName>
    </alternativeName>
</protein>
<organism>
    <name type="scientific">Bordetella bronchiseptica (strain ATCC BAA-588 / NCTC 13252 / RB50)</name>
    <name type="common">Alcaligenes bronchisepticus</name>
    <dbReference type="NCBI Taxonomy" id="257310"/>
    <lineage>
        <taxon>Bacteria</taxon>
        <taxon>Pseudomonadati</taxon>
        <taxon>Pseudomonadota</taxon>
        <taxon>Betaproteobacteria</taxon>
        <taxon>Burkholderiales</taxon>
        <taxon>Alcaligenaceae</taxon>
        <taxon>Bordetella</taxon>
    </lineage>
</organism>
<sequence>MSVADIRKSAETRMAKSLETLKASLAKIRTGRAHTGILDHVQVEYYGSPVPISQVANVNLVDARTISVQPYEKSMAGPIEKAIRESDLGLNPVSMGETIRVPMPALTEERRRDLTKVVKSEGEDAKVAVRNLRREANEALKKLVKDKEISEDDERRAQDDVQKLTDRAVGDIDKMIVQKEAEIMTV</sequence>
<gene>
    <name evidence="1" type="primary">frr</name>
    <name type="ordered locus">BB2608</name>
</gene>
<comment type="function">
    <text evidence="1">Responsible for the release of ribosomes from messenger RNA at the termination of protein biosynthesis. May increase the efficiency of translation by recycling ribosomes from one round of translation to another.</text>
</comment>
<comment type="subcellular location">
    <subcellularLocation>
        <location evidence="1">Cytoplasm</location>
    </subcellularLocation>
</comment>
<comment type="similarity">
    <text evidence="1">Belongs to the RRF family.</text>
</comment>
<keyword id="KW-0963">Cytoplasm</keyword>
<keyword id="KW-0648">Protein biosynthesis</keyword>
<name>RRF_BORBR</name>